<evidence type="ECO:0000255" key="1"/>
<evidence type="ECO:0000305" key="2"/>
<protein>
    <recommendedName>
        <fullName>Uncharacterized protein YwnC</fullName>
    </recommendedName>
</protein>
<name>YWNC_BACSU</name>
<reference key="1">
    <citation type="journal article" date="1997" name="J. Bacteriol.">
        <title>The Bacillus subtilis ureABC operon.</title>
        <authorList>
            <person name="Cruz-Ramos H."/>
            <person name="Glaser P."/>
            <person name="Wray L.V. Jr."/>
            <person name="Fisher S.H."/>
        </authorList>
    </citation>
    <scope>NUCLEOTIDE SEQUENCE [GENOMIC DNA]</scope>
    <source>
        <strain>168</strain>
    </source>
</reference>
<reference key="2">
    <citation type="journal article" date="1997" name="Nature">
        <title>The complete genome sequence of the Gram-positive bacterium Bacillus subtilis.</title>
        <authorList>
            <person name="Kunst F."/>
            <person name="Ogasawara N."/>
            <person name="Moszer I."/>
            <person name="Albertini A.M."/>
            <person name="Alloni G."/>
            <person name="Azevedo V."/>
            <person name="Bertero M.G."/>
            <person name="Bessieres P."/>
            <person name="Bolotin A."/>
            <person name="Borchert S."/>
            <person name="Borriss R."/>
            <person name="Boursier L."/>
            <person name="Brans A."/>
            <person name="Braun M."/>
            <person name="Brignell S.C."/>
            <person name="Bron S."/>
            <person name="Brouillet S."/>
            <person name="Bruschi C.V."/>
            <person name="Caldwell B."/>
            <person name="Capuano V."/>
            <person name="Carter N.M."/>
            <person name="Choi S.-K."/>
            <person name="Codani J.-J."/>
            <person name="Connerton I.F."/>
            <person name="Cummings N.J."/>
            <person name="Daniel R.A."/>
            <person name="Denizot F."/>
            <person name="Devine K.M."/>
            <person name="Duesterhoeft A."/>
            <person name="Ehrlich S.D."/>
            <person name="Emmerson P.T."/>
            <person name="Entian K.-D."/>
            <person name="Errington J."/>
            <person name="Fabret C."/>
            <person name="Ferrari E."/>
            <person name="Foulger D."/>
            <person name="Fritz C."/>
            <person name="Fujita M."/>
            <person name="Fujita Y."/>
            <person name="Fuma S."/>
            <person name="Galizzi A."/>
            <person name="Galleron N."/>
            <person name="Ghim S.-Y."/>
            <person name="Glaser P."/>
            <person name="Goffeau A."/>
            <person name="Golightly E.J."/>
            <person name="Grandi G."/>
            <person name="Guiseppi G."/>
            <person name="Guy B.J."/>
            <person name="Haga K."/>
            <person name="Haiech J."/>
            <person name="Harwood C.R."/>
            <person name="Henaut A."/>
            <person name="Hilbert H."/>
            <person name="Holsappel S."/>
            <person name="Hosono S."/>
            <person name="Hullo M.-F."/>
            <person name="Itaya M."/>
            <person name="Jones L.-M."/>
            <person name="Joris B."/>
            <person name="Karamata D."/>
            <person name="Kasahara Y."/>
            <person name="Klaerr-Blanchard M."/>
            <person name="Klein C."/>
            <person name="Kobayashi Y."/>
            <person name="Koetter P."/>
            <person name="Koningstein G."/>
            <person name="Krogh S."/>
            <person name="Kumano M."/>
            <person name="Kurita K."/>
            <person name="Lapidus A."/>
            <person name="Lardinois S."/>
            <person name="Lauber J."/>
            <person name="Lazarevic V."/>
            <person name="Lee S.-M."/>
            <person name="Levine A."/>
            <person name="Liu H."/>
            <person name="Masuda S."/>
            <person name="Mauel C."/>
            <person name="Medigue C."/>
            <person name="Medina N."/>
            <person name="Mellado R.P."/>
            <person name="Mizuno M."/>
            <person name="Moestl D."/>
            <person name="Nakai S."/>
            <person name="Noback M."/>
            <person name="Noone D."/>
            <person name="O'Reilly M."/>
            <person name="Ogawa K."/>
            <person name="Ogiwara A."/>
            <person name="Oudega B."/>
            <person name="Park S.-H."/>
            <person name="Parro V."/>
            <person name="Pohl T.M."/>
            <person name="Portetelle D."/>
            <person name="Porwollik S."/>
            <person name="Prescott A.M."/>
            <person name="Presecan E."/>
            <person name="Pujic P."/>
            <person name="Purnelle B."/>
            <person name="Rapoport G."/>
            <person name="Rey M."/>
            <person name="Reynolds S."/>
            <person name="Rieger M."/>
            <person name="Rivolta C."/>
            <person name="Rocha E."/>
            <person name="Roche B."/>
            <person name="Rose M."/>
            <person name="Sadaie Y."/>
            <person name="Sato T."/>
            <person name="Scanlan E."/>
            <person name="Schleich S."/>
            <person name="Schroeter R."/>
            <person name="Scoffone F."/>
            <person name="Sekiguchi J."/>
            <person name="Sekowska A."/>
            <person name="Seror S.J."/>
            <person name="Serror P."/>
            <person name="Shin B.-S."/>
            <person name="Soldo B."/>
            <person name="Sorokin A."/>
            <person name="Tacconi E."/>
            <person name="Takagi T."/>
            <person name="Takahashi H."/>
            <person name="Takemaru K."/>
            <person name="Takeuchi M."/>
            <person name="Tamakoshi A."/>
            <person name="Tanaka T."/>
            <person name="Terpstra P."/>
            <person name="Tognoni A."/>
            <person name="Tosato V."/>
            <person name="Uchiyama S."/>
            <person name="Vandenbol M."/>
            <person name="Vannier F."/>
            <person name="Vassarotti A."/>
            <person name="Viari A."/>
            <person name="Wambutt R."/>
            <person name="Wedler E."/>
            <person name="Wedler H."/>
            <person name="Weitzenegger T."/>
            <person name="Winters P."/>
            <person name="Wipat A."/>
            <person name="Yamamoto H."/>
            <person name="Yamane K."/>
            <person name="Yasumoto K."/>
            <person name="Yata K."/>
            <person name="Yoshida K."/>
            <person name="Yoshikawa H.-F."/>
            <person name="Zumstein E."/>
            <person name="Yoshikawa H."/>
            <person name="Danchin A."/>
        </authorList>
    </citation>
    <scope>NUCLEOTIDE SEQUENCE [LARGE SCALE GENOMIC DNA]</scope>
    <source>
        <strain>168</strain>
    </source>
</reference>
<keyword id="KW-0472">Membrane</keyword>
<keyword id="KW-1185">Reference proteome</keyword>
<keyword id="KW-0812">Transmembrane</keyword>
<keyword id="KW-1133">Transmembrane helix</keyword>
<proteinExistence type="predicted"/>
<comment type="subcellular location">
    <subcellularLocation>
        <location evidence="2">Membrane</location>
        <topology evidence="2">Single-pass membrane protein</topology>
    </subcellularLocation>
</comment>
<gene>
    <name type="primary">ywnC</name>
    <name type="ordered locus">BSU36610</name>
</gene>
<feature type="chain" id="PRO_0000049987" description="Uncharacterized protein YwnC">
    <location>
        <begin position="1"/>
        <end position="127"/>
    </location>
</feature>
<feature type="transmembrane region" description="Helical" evidence="1">
    <location>
        <begin position="91"/>
        <end position="113"/>
    </location>
</feature>
<sequence>MNPETMNKTLISISKWGKATGILFIIMGAITALSGAFFFLIGAVPGVLQIISGIFLMRSAREAGQMAEHNSGQSEDLMLENYAKFVKMQGIYLIVSIAVSILAIIAFFIFLMLGIADGLFSDTYSTY</sequence>
<dbReference type="EMBL" id="Y08559">
    <property type="protein sequence ID" value="CAA69862.1"/>
    <property type="molecule type" value="Genomic_DNA"/>
</dbReference>
<dbReference type="EMBL" id="AL009126">
    <property type="protein sequence ID" value="CAB15678.1"/>
    <property type="molecule type" value="Genomic_DNA"/>
</dbReference>
<dbReference type="PIR" id="F70063">
    <property type="entry name" value="F70063"/>
</dbReference>
<dbReference type="RefSeq" id="NP_391542.1">
    <property type="nucleotide sequence ID" value="NC_000964.3"/>
</dbReference>
<dbReference type="RefSeq" id="WP_003227738.1">
    <property type="nucleotide sequence ID" value="NZ_OZ025638.1"/>
</dbReference>
<dbReference type="SMR" id="P71038"/>
<dbReference type="FunCoup" id="P71038">
    <property type="interactions" value="137"/>
</dbReference>
<dbReference type="PaxDb" id="224308-BSU36610"/>
<dbReference type="EnsemblBacteria" id="CAB15678">
    <property type="protein sequence ID" value="CAB15678"/>
    <property type="gene ID" value="BSU_36610"/>
</dbReference>
<dbReference type="GeneID" id="936950"/>
<dbReference type="KEGG" id="bsu:BSU36610"/>
<dbReference type="PATRIC" id="fig|224308.179.peg.3962"/>
<dbReference type="eggNOG" id="ENOG5033EBE">
    <property type="taxonomic scope" value="Bacteria"/>
</dbReference>
<dbReference type="InParanoid" id="P71038"/>
<dbReference type="OrthoDB" id="2932876at2"/>
<dbReference type="BioCyc" id="BSUB:BSU36610-MONOMER"/>
<dbReference type="Proteomes" id="UP000001570">
    <property type="component" value="Chromosome"/>
</dbReference>
<dbReference type="GO" id="GO:0016020">
    <property type="term" value="C:membrane"/>
    <property type="evidence" value="ECO:0007669"/>
    <property type="project" value="UniProtKB-SubCell"/>
</dbReference>
<dbReference type="InterPro" id="IPR035287">
    <property type="entry name" value="DUF5362"/>
</dbReference>
<dbReference type="Pfam" id="PF17319">
    <property type="entry name" value="DUF5362"/>
    <property type="match status" value="1"/>
</dbReference>
<accession>P71038</accession>
<organism>
    <name type="scientific">Bacillus subtilis (strain 168)</name>
    <dbReference type="NCBI Taxonomy" id="224308"/>
    <lineage>
        <taxon>Bacteria</taxon>
        <taxon>Bacillati</taxon>
        <taxon>Bacillota</taxon>
        <taxon>Bacilli</taxon>
        <taxon>Bacillales</taxon>
        <taxon>Bacillaceae</taxon>
        <taxon>Bacillus</taxon>
    </lineage>
</organism>